<organism>
    <name type="scientific">Shewanella sp. (strain W3-18-1)</name>
    <dbReference type="NCBI Taxonomy" id="351745"/>
    <lineage>
        <taxon>Bacteria</taxon>
        <taxon>Pseudomonadati</taxon>
        <taxon>Pseudomonadota</taxon>
        <taxon>Gammaproteobacteria</taxon>
        <taxon>Alteromonadales</taxon>
        <taxon>Shewanellaceae</taxon>
        <taxon>Shewanella</taxon>
    </lineage>
</organism>
<reference key="1">
    <citation type="submission" date="2006-12" db="EMBL/GenBank/DDBJ databases">
        <title>Complete sequence of Shewanella sp. W3-18-1.</title>
        <authorList>
            <consortium name="US DOE Joint Genome Institute"/>
            <person name="Copeland A."/>
            <person name="Lucas S."/>
            <person name="Lapidus A."/>
            <person name="Barry K."/>
            <person name="Detter J.C."/>
            <person name="Glavina del Rio T."/>
            <person name="Hammon N."/>
            <person name="Israni S."/>
            <person name="Dalin E."/>
            <person name="Tice H."/>
            <person name="Pitluck S."/>
            <person name="Chain P."/>
            <person name="Malfatti S."/>
            <person name="Shin M."/>
            <person name="Vergez L."/>
            <person name="Schmutz J."/>
            <person name="Larimer F."/>
            <person name="Land M."/>
            <person name="Hauser L."/>
            <person name="Kyrpides N."/>
            <person name="Lykidis A."/>
            <person name="Tiedje J."/>
            <person name="Richardson P."/>
        </authorList>
    </citation>
    <scope>NUCLEOTIDE SEQUENCE [LARGE SCALE GENOMIC DNA]</scope>
    <source>
        <strain>W3-18-1</strain>
    </source>
</reference>
<proteinExistence type="inferred from homology"/>
<dbReference type="EMBL" id="CP000503">
    <property type="protein sequence ID" value="ABM23053.1"/>
    <property type="molecule type" value="Genomic_DNA"/>
</dbReference>
<dbReference type="RefSeq" id="WP_011787600.1">
    <property type="nucleotide sequence ID" value="NC_008750.1"/>
</dbReference>
<dbReference type="SMR" id="A1REF8"/>
<dbReference type="KEGG" id="shw:Sputw3181_0201"/>
<dbReference type="HOGENOM" id="CLU_168367_0_0_6"/>
<dbReference type="Proteomes" id="UP000002597">
    <property type="component" value="Chromosome"/>
</dbReference>
<dbReference type="GO" id="GO:0045283">
    <property type="term" value="C:fumarate reductase complex"/>
    <property type="evidence" value="ECO:0007669"/>
    <property type="project" value="UniProtKB-UniRule"/>
</dbReference>
<dbReference type="GO" id="GO:0005886">
    <property type="term" value="C:plasma membrane"/>
    <property type="evidence" value="ECO:0007669"/>
    <property type="project" value="UniProtKB-SubCell"/>
</dbReference>
<dbReference type="GO" id="GO:0000104">
    <property type="term" value="F:succinate dehydrogenase activity"/>
    <property type="evidence" value="ECO:0007669"/>
    <property type="project" value="UniProtKB-UniRule"/>
</dbReference>
<dbReference type="GO" id="GO:0006106">
    <property type="term" value="P:fumarate metabolic process"/>
    <property type="evidence" value="ECO:0007669"/>
    <property type="project" value="InterPro"/>
</dbReference>
<dbReference type="CDD" id="cd00547">
    <property type="entry name" value="QFR_TypeD_subunitD"/>
    <property type="match status" value="1"/>
</dbReference>
<dbReference type="Gene3D" id="1.20.1300.10">
    <property type="entry name" value="Fumarate reductase/succinate dehydrogenase, transmembrane subunit"/>
    <property type="match status" value="1"/>
</dbReference>
<dbReference type="HAMAP" id="MF_00709">
    <property type="entry name" value="Fumarate_red_D"/>
    <property type="match status" value="1"/>
</dbReference>
<dbReference type="InterPro" id="IPR003418">
    <property type="entry name" value="Fumarate_red_D"/>
</dbReference>
<dbReference type="InterPro" id="IPR034804">
    <property type="entry name" value="SQR/QFR_C/D"/>
</dbReference>
<dbReference type="NCBIfam" id="NF003977">
    <property type="entry name" value="PRK05470.1-1"/>
    <property type="match status" value="1"/>
</dbReference>
<dbReference type="Pfam" id="PF02313">
    <property type="entry name" value="Fumarate_red_D"/>
    <property type="match status" value="1"/>
</dbReference>
<dbReference type="PIRSF" id="PIRSF000179">
    <property type="entry name" value="FrdD"/>
    <property type="match status" value="1"/>
</dbReference>
<dbReference type="SUPFAM" id="SSF81343">
    <property type="entry name" value="Fumarate reductase respiratory complex transmembrane subunits"/>
    <property type="match status" value="1"/>
</dbReference>
<name>FRDD_SHESW</name>
<keyword id="KW-0997">Cell inner membrane</keyword>
<keyword id="KW-1003">Cell membrane</keyword>
<keyword id="KW-0472">Membrane</keyword>
<keyword id="KW-0812">Transmembrane</keyword>
<keyword id="KW-1133">Transmembrane helix</keyword>
<protein>
    <recommendedName>
        <fullName evidence="1">Fumarate reductase subunit D</fullName>
    </recommendedName>
    <alternativeName>
        <fullName evidence="1">Quinol-fumarate reductase subunit D</fullName>
        <shortName evidence="1">QFR subunit D</shortName>
    </alternativeName>
</protein>
<comment type="function">
    <text evidence="1">Anchors the catalytic components of the fumarate reductase complex to the cell membrane, binds quinones.</text>
</comment>
<comment type="subunit">
    <text evidence="1">Part of an enzyme complex containing four subunits: a flavoprotein (FrdA), an iron-sulfur protein (FrdB), and two hydrophobic anchor proteins (FrdC and FrdD).</text>
</comment>
<comment type="subcellular location">
    <subcellularLocation>
        <location evidence="1">Cell inner membrane</location>
        <topology evidence="1">Multi-pass membrane protein</topology>
    </subcellularLocation>
</comment>
<comment type="similarity">
    <text evidence="1">Belongs to the FrdD family.</text>
</comment>
<sequence>MINYSPKRSDEPIWWGLFGAGGVWFAMITPVTVLLMGILLPLHGFGVVDIGYDKVYAFVSHPIGGAFTVLSLSLPMWHAMHRVHHGLHDLQIHLGTVGKYACYLAAALVTVLATVWVIQLS</sequence>
<feature type="chain" id="PRO_1000132417" description="Fumarate reductase subunit D">
    <location>
        <begin position="1"/>
        <end position="121"/>
    </location>
</feature>
<feature type="transmembrane region" description="Helical" evidence="1">
    <location>
        <begin position="22"/>
        <end position="42"/>
    </location>
</feature>
<feature type="transmembrane region" description="Helical" evidence="1">
    <location>
        <begin position="57"/>
        <end position="77"/>
    </location>
</feature>
<feature type="transmembrane region" description="Helical" evidence="1">
    <location>
        <begin position="100"/>
        <end position="120"/>
    </location>
</feature>
<evidence type="ECO:0000255" key="1">
    <source>
        <dbReference type="HAMAP-Rule" id="MF_00709"/>
    </source>
</evidence>
<accession>A1REF8</accession>
<gene>
    <name evidence="1" type="primary">frdD</name>
    <name type="ordered locus">Sputw3181_0201</name>
</gene>